<feature type="chain" id="PRO_0000413283" description="Glutamyl-tRNA(Gln) amidotransferase subunit B, mitochondrial">
    <location>
        <begin position="1"/>
        <end position="536"/>
    </location>
</feature>
<evidence type="ECO:0000255" key="1">
    <source>
        <dbReference type="HAMAP-Rule" id="MF_03147"/>
    </source>
</evidence>
<proteinExistence type="inferred from homology"/>
<reference key="1">
    <citation type="journal article" date="2007" name="Proc. Natl. Acad. Sci. U.S.A.">
        <title>Independent sorting-out of thousands of duplicated gene pairs in two yeast species descended from a whole-genome duplication.</title>
        <authorList>
            <person name="Scannell D.R."/>
            <person name="Frank A.C."/>
            <person name="Conant G.C."/>
            <person name="Byrne K.P."/>
            <person name="Woolfit M."/>
            <person name="Wolfe K.H."/>
        </authorList>
    </citation>
    <scope>NUCLEOTIDE SEQUENCE [LARGE SCALE GENOMIC DNA]</scope>
    <source>
        <strain>ATCC 22028 / DSM 70294 / BCRC 21397 / CBS 2163 / NBRC 10782 / NRRL Y-8283 / UCD 57-17</strain>
    </source>
</reference>
<sequence length="536" mass="61369">MLKVSKRYYGFQSKSPFQLLPDFRLKCGLEIHTQLNTKFKLFSFSTNDPFHSIDSPNSNVSFFDAALPGTQPILNYEAVIDAIKLSLALNCDINANSQFDRKHYFYGDQPLGYQITQHYSPISSNGKLSLFENIDNIDQSQKDIGIIQLQIEQDTGKSMYDDSKHFTRIDLNRSNVPLIEMVTKPDFTDLKQVRSFIKKYQNLVRHLKISSGDLETGAMRVDVNLSINDYARVELKNLPNTSSIVNAIKYEYNRQVEIIKNGSADELLTSPETRSWTGVKTVKLRSKETTIDYRYLPDPELPRVILDNDVITNISNSIPTLPDELLSRLISKPYNLSMKDAKILVLNSNGQNEMYTQEELQNFYLKVFDCYYNVVGEKLNHKLPVNWIIHELIGSLNKLELPLSKVLPKLSPEKFSEFIVLIHNKEISNTSAKLLLFHVLNQIKENDHSIREINFDSLIEEFELKPATNASKVDLTELCQTIITELNNEKLLNDIISGKKKNSIQYLVGLGMRASQGTLSPQSLEETFKKILQVKW</sequence>
<name>GATB_VANPO</name>
<protein>
    <recommendedName>
        <fullName evidence="1">Glutamyl-tRNA(Gln) amidotransferase subunit B, mitochondrial</fullName>
        <shortName evidence="1">Glu-AdT subunit B</shortName>
        <ecNumber evidence="1">6.3.5.-</ecNumber>
    </recommendedName>
</protein>
<organism>
    <name type="scientific">Vanderwaltozyma polyspora (strain ATCC 22028 / DSM 70294 / BCRC 21397 / CBS 2163 / NBRC 10782 / NRRL Y-8283 / UCD 57-17)</name>
    <name type="common">Kluyveromyces polysporus</name>
    <dbReference type="NCBI Taxonomy" id="436907"/>
    <lineage>
        <taxon>Eukaryota</taxon>
        <taxon>Fungi</taxon>
        <taxon>Dikarya</taxon>
        <taxon>Ascomycota</taxon>
        <taxon>Saccharomycotina</taxon>
        <taxon>Saccharomycetes</taxon>
        <taxon>Saccharomycetales</taxon>
        <taxon>Saccharomycetaceae</taxon>
        <taxon>Vanderwaltozyma</taxon>
    </lineage>
</organism>
<comment type="function">
    <text evidence="1">Allows the formation of correctly charged Gln-tRNA(Gln) through the transamidation of misacylated Glu-tRNA(Gln) in the mitochondria. The reaction takes place in the presence of glutamine and ATP through an activated gamma-phospho-Glu-tRNA(Gln).</text>
</comment>
<comment type="catalytic activity">
    <reaction evidence="1">
        <text>L-glutamyl-tRNA(Gln) + L-glutamine + ATP + H2O = L-glutaminyl-tRNA(Gln) + L-glutamate + ADP + phosphate + H(+)</text>
        <dbReference type="Rhea" id="RHEA:17521"/>
        <dbReference type="Rhea" id="RHEA-COMP:9681"/>
        <dbReference type="Rhea" id="RHEA-COMP:9684"/>
        <dbReference type="ChEBI" id="CHEBI:15377"/>
        <dbReference type="ChEBI" id="CHEBI:15378"/>
        <dbReference type="ChEBI" id="CHEBI:29985"/>
        <dbReference type="ChEBI" id="CHEBI:30616"/>
        <dbReference type="ChEBI" id="CHEBI:43474"/>
        <dbReference type="ChEBI" id="CHEBI:58359"/>
        <dbReference type="ChEBI" id="CHEBI:78520"/>
        <dbReference type="ChEBI" id="CHEBI:78521"/>
        <dbReference type="ChEBI" id="CHEBI:456216"/>
    </reaction>
</comment>
<comment type="subunit">
    <text evidence="1">Subunit of the heterotrimeric GatFAB amidotransferase (AdT) complex, composed of A, B and F subunits.</text>
</comment>
<comment type="subcellular location">
    <subcellularLocation>
        <location evidence="1">Mitochondrion</location>
    </subcellularLocation>
</comment>
<comment type="miscellaneous">
    <text evidence="1">This protein may be expected to contain an N-terminal transit peptide but none has been predicted.</text>
</comment>
<comment type="similarity">
    <text evidence="1">Belongs to the GatB/GatE family. GatB subfamily.</text>
</comment>
<dbReference type="EC" id="6.3.5.-" evidence="1"/>
<dbReference type="EMBL" id="DS480394">
    <property type="protein sequence ID" value="EDO18048.1"/>
    <property type="molecule type" value="Genomic_DNA"/>
</dbReference>
<dbReference type="RefSeq" id="XP_001645906.1">
    <property type="nucleotide sequence ID" value="XM_001645856.1"/>
</dbReference>
<dbReference type="SMR" id="A7TI41"/>
<dbReference type="FunCoup" id="A7TI41">
    <property type="interactions" value="405"/>
</dbReference>
<dbReference type="STRING" id="436907.A7TI41"/>
<dbReference type="GeneID" id="5546317"/>
<dbReference type="KEGG" id="vpo:Kpol_1045p34"/>
<dbReference type="eggNOG" id="KOG2438">
    <property type="taxonomic scope" value="Eukaryota"/>
</dbReference>
<dbReference type="HOGENOM" id="CLU_019240_4_0_1"/>
<dbReference type="InParanoid" id="A7TI41"/>
<dbReference type="OMA" id="ARKWWMG"/>
<dbReference type="OrthoDB" id="1722066at2759"/>
<dbReference type="PhylomeDB" id="A7TI41"/>
<dbReference type="Proteomes" id="UP000000267">
    <property type="component" value="Unassembled WGS sequence"/>
</dbReference>
<dbReference type="GO" id="GO:0030956">
    <property type="term" value="C:glutamyl-tRNA(Gln) amidotransferase complex"/>
    <property type="evidence" value="ECO:0007669"/>
    <property type="project" value="UniProtKB-UniRule"/>
</dbReference>
<dbReference type="GO" id="GO:0005739">
    <property type="term" value="C:mitochondrion"/>
    <property type="evidence" value="ECO:0007669"/>
    <property type="project" value="UniProtKB-SubCell"/>
</dbReference>
<dbReference type="GO" id="GO:0005524">
    <property type="term" value="F:ATP binding"/>
    <property type="evidence" value="ECO:0007669"/>
    <property type="project" value="UniProtKB-KW"/>
</dbReference>
<dbReference type="GO" id="GO:0050567">
    <property type="term" value="F:glutaminyl-tRNA synthase (glutamine-hydrolyzing) activity"/>
    <property type="evidence" value="ECO:0007669"/>
    <property type="project" value="UniProtKB-UniRule"/>
</dbReference>
<dbReference type="GO" id="GO:0070681">
    <property type="term" value="P:glutaminyl-tRNAGln biosynthesis via transamidation"/>
    <property type="evidence" value="ECO:0007669"/>
    <property type="project" value="UniProtKB-UniRule"/>
</dbReference>
<dbReference type="GO" id="GO:0032543">
    <property type="term" value="P:mitochondrial translation"/>
    <property type="evidence" value="ECO:0007669"/>
    <property type="project" value="UniProtKB-UniRule"/>
</dbReference>
<dbReference type="Gene3D" id="1.10.10.410">
    <property type="match status" value="1"/>
</dbReference>
<dbReference type="HAMAP" id="MF_00121">
    <property type="entry name" value="GatB"/>
    <property type="match status" value="1"/>
</dbReference>
<dbReference type="InterPro" id="IPR017959">
    <property type="entry name" value="Asn/Gln-tRNA_amidoTrfase_suB/E"/>
</dbReference>
<dbReference type="InterPro" id="IPR006075">
    <property type="entry name" value="Asn/Gln-tRNA_Trfase_suB/E_cat"/>
</dbReference>
<dbReference type="InterPro" id="IPR018027">
    <property type="entry name" value="Asn/Gln_amidotransferase"/>
</dbReference>
<dbReference type="InterPro" id="IPR003789">
    <property type="entry name" value="Asn/Gln_tRNA_amidoTrase-B-like"/>
</dbReference>
<dbReference type="InterPro" id="IPR004413">
    <property type="entry name" value="GatB"/>
</dbReference>
<dbReference type="InterPro" id="IPR023168">
    <property type="entry name" value="GatB_Yqey_C_2"/>
</dbReference>
<dbReference type="InterPro" id="IPR017958">
    <property type="entry name" value="Gln-tRNA_amidoTrfase_suB_CS"/>
</dbReference>
<dbReference type="InterPro" id="IPR014746">
    <property type="entry name" value="Gln_synth/guanido_kin_cat_dom"/>
</dbReference>
<dbReference type="NCBIfam" id="TIGR00133">
    <property type="entry name" value="gatB"/>
    <property type="match status" value="1"/>
</dbReference>
<dbReference type="NCBIfam" id="NF004012">
    <property type="entry name" value="PRK05477.1-2"/>
    <property type="match status" value="1"/>
</dbReference>
<dbReference type="PANTHER" id="PTHR11659">
    <property type="entry name" value="GLUTAMYL-TRNA GLN AMIDOTRANSFERASE SUBUNIT B MITOCHONDRIAL AND PROKARYOTIC PET112-RELATED"/>
    <property type="match status" value="1"/>
</dbReference>
<dbReference type="PANTHER" id="PTHR11659:SF0">
    <property type="entry name" value="GLUTAMYL-TRNA(GLN) AMIDOTRANSFERASE SUBUNIT B, MITOCHONDRIAL"/>
    <property type="match status" value="1"/>
</dbReference>
<dbReference type="Pfam" id="PF02934">
    <property type="entry name" value="GatB_N"/>
    <property type="match status" value="1"/>
</dbReference>
<dbReference type="Pfam" id="PF02637">
    <property type="entry name" value="GatB_Yqey"/>
    <property type="match status" value="1"/>
</dbReference>
<dbReference type="SMART" id="SM00845">
    <property type="entry name" value="GatB_Yqey"/>
    <property type="match status" value="1"/>
</dbReference>
<dbReference type="SUPFAM" id="SSF89095">
    <property type="entry name" value="GatB/YqeY motif"/>
    <property type="match status" value="1"/>
</dbReference>
<dbReference type="SUPFAM" id="SSF55931">
    <property type="entry name" value="Glutamine synthetase/guanido kinase"/>
    <property type="match status" value="1"/>
</dbReference>
<dbReference type="PROSITE" id="PS01234">
    <property type="entry name" value="GATB"/>
    <property type="match status" value="1"/>
</dbReference>
<gene>
    <name evidence="1" type="primary">PET112</name>
    <name type="ORF">Kpol_1045p34</name>
</gene>
<accession>A7TI41</accession>
<keyword id="KW-0067">ATP-binding</keyword>
<keyword id="KW-0436">Ligase</keyword>
<keyword id="KW-0496">Mitochondrion</keyword>
<keyword id="KW-0547">Nucleotide-binding</keyword>
<keyword id="KW-0648">Protein biosynthesis</keyword>
<keyword id="KW-1185">Reference proteome</keyword>